<keyword id="KW-0687">Ribonucleoprotein</keyword>
<keyword id="KW-0689">Ribosomal protein</keyword>
<accession>A2CC55</accession>
<sequence>MSSSNNSVVYWGTGRRKTSVARVRLVPGTGTITINGRPGDHYLNFNPAYLAAVKAPLQTLGLNEQYDVLVNVHGGGLTGQADAIKQGAARALCELSADNRKPLKTEGHLSRDPRAKERRKYGLKKARKAPQFSKR</sequence>
<proteinExistence type="inferred from homology"/>
<reference key="1">
    <citation type="journal article" date="2007" name="PLoS Genet.">
        <title>Patterns and implications of gene gain and loss in the evolution of Prochlorococcus.</title>
        <authorList>
            <person name="Kettler G.C."/>
            <person name="Martiny A.C."/>
            <person name="Huang K."/>
            <person name="Zucker J."/>
            <person name="Coleman M.L."/>
            <person name="Rodrigue S."/>
            <person name="Chen F."/>
            <person name="Lapidus A."/>
            <person name="Ferriera S."/>
            <person name="Johnson J."/>
            <person name="Steglich C."/>
            <person name="Church G.M."/>
            <person name="Richardson P."/>
            <person name="Chisholm S.W."/>
        </authorList>
    </citation>
    <scope>NUCLEOTIDE SEQUENCE [LARGE SCALE GENOMIC DNA]</scope>
    <source>
        <strain>MIT 9303</strain>
    </source>
</reference>
<dbReference type="EMBL" id="CP000554">
    <property type="protein sequence ID" value="ABM79065.1"/>
    <property type="molecule type" value="Genomic_DNA"/>
</dbReference>
<dbReference type="RefSeq" id="WP_011826929.1">
    <property type="nucleotide sequence ID" value="NC_008820.1"/>
</dbReference>
<dbReference type="SMR" id="A2CC55"/>
<dbReference type="STRING" id="59922.P9303_23301"/>
<dbReference type="KEGG" id="pmf:P9303_23301"/>
<dbReference type="HOGENOM" id="CLU_046483_2_1_3"/>
<dbReference type="BioCyc" id="PMAR59922:G1G80-2047-MONOMER"/>
<dbReference type="Proteomes" id="UP000002274">
    <property type="component" value="Chromosome"/>
</dbReference>
<dbReference type="GO" id="GO:0022627">
    <property type="term" value="C:cytosolic small ribosomal subunit"/>
    <property type="evidence" value="ECO:0007669"/>
    <property type="project" value="TreeGrafter"/>
</dbReference>
<dbReference type="GO" id="GO:0003723">
    <property type="term" value="F:RNA binding"/>
    <property type="evidence" value="ECO:0007669"/>
    <property type="project" value="TreeGrafter"/>
</dbReference>
<dbReference type="GO" id="GO:0003735">
    <property type="term" value="F:structural constituent of ribosome"/>
    <property type="evidence" value="ECO:0007669"/>
    <property type="project" value="InterPro"/>
</dbReference>
<dbReference type="GO" id="GO:0006412">
    <property type="term" value="P:translation"/>
    <property type="evidence" value="ECO:0007669"/>
    <property type="project" value="UniProtKB-UniRule"/>
</dbReference>
<dbReference type="FunFam" id="3.30.230.10:FF:000001">
    <property type="entry name" value="30S ribosomal protein S9"/>
    <property type="match status" value="1"/>
</dbReference>
<dbReference type="Gene3D" id="3.30.230.10">
    <property type="match status" value="1"/>
</dbReference>
<dbReference type="HAMAP" id="MF_00532_B">
    <property type="entry name" value="Ribosomal_uS9_B"/>
    <property type="match status" value="1"/>
</dbReference>
<dbReference type="InterPro" id="IPR020568">
    <property type="entry name" value="Ribosomal_Su5_D2-typ_SF"/>
</dbReference>
<dbReference type="InterPro" id="IPR000754">
    <property type="entry name" value="Ribosomal_uS9"/>
</dbReference>
<dbReference type="InterPro" id="IPR023035">
    <property type="entry name" value="Ribosomal_uS9_bac/plastid"/>
</dbReference>
<dbReference type="InterPro" id="IPR020574">
    <property type="entry name" value="Ribosomal_uS9_CS"/>
</dbReference>
<dbReference type="InterPro" id="IPR014721">
    <property type="entry name" value="Ribsml_uS5_D2-typ_fold_subgr"/>
</dbReference>
<dbReference type="NCBIfam" id="NF001099">
    <property type="entry name" value="PRK00132.1"/>
    <property type="match status" value="1"/>
</dbReference>
<dbReference type="PANTHER" id="PTHR21569">
    <property type="entry name" value="RIBOSOMAL PROTEIN S9"/>
    <property type="match status" value="1"/>
</dbReference>
<dbReference type="PANTHER" id="PTHR21569:SF1">
    <property type="entry name" value="SMALL RIBOSOMAL SUBUNIT PROTEIN US9M"/>
    <property type="match status" value="1"/>
</dbReference>
<dbReference type="Pfam" id="PF00380">
    <property type="entry name" value="Ribosomal_S9"/>
    <property type="match status" value="1"/>
</dbReference>
<dbReference type="SUPFAM" id="SSF54211">
    <property type="entry name" value="Ribosomal protein S5 domain 2-like"/>
    <property type="match status" value="1"/>
</dbReference>
<dbReference type="PROSITE" id="PS00360">
    <property type="entry name" value="RIBOSOMAL_S9"/>
    <property type="match status" value="1"/>
</dbReference>
<organism>
    <name type="scientific">Prochlorococcus marinus (strain MIT 9303)</name>
    <dbReference type="NCBI Taxonomy" id="59922"/>
    <lineage>
        <taxon>Bacteria</taxon>
        <taxon>Bacillati</taxon>
        <taxon>Cyanobacteriota</taxon>
        <taxon>Cyanophyceae</taxon>
        <taxon>Synechococcales</taxon>
        <taxon>Prochlorococcaceae</taxon>
        <taxon>Prochlorococcus</taxon>
    </lineage>
</organism>
<comment type="similarity">
    <text evidence="1">Belongs to the universal ribosomal protein uS9 family.</text>
</comment>
<name>RS9_PROM3</name>
<gene>
    <name evidence="1" type="primary">rpsI</name>
    <name evidence="1" type="synonym">rps9</name>
    <name type="ordered locus">P9303_23301</name>
</gene>
<feature type="chain" id="PRO_1000051285" description="Small ribosomal subunit protein uS9">
    <location>
        <begin position="1"/>
        <end position="135"/>
    </location>
</feature>
<feature type="region of interest" description="Disordered" evidence="2">
    <location>
        <begin position="96"/>
        <end position="135"/>
    </location>
</feature>
<feature type="compositionally biased region" description="Basic and acidic residues" evidence="2">
    <location>
        <begin position="97"/>
        <end position="115"/>
    </location>
</feature>
<feature type="compositionally biased region" description="Basic residues" evidence="2">
    <location>
        <begin position="116"/>
        <end position="135"/>
    </location>
</feature>
<evidence type="ECO:0000255" key="1">
    <source>
        <dbReference type="HAMAP-Rule" id="MF_00532"/>
    </source>
</evidence>
<evidence type="ECO:0000256" key="2">
    <source>
        <dbReference type="SAM" id="MobiDB-lite"/>
    </source>
</evidence>
<evidence type="ECO:0000305" key="3"/>
<protein>
    <recommendedName>
        <fullName evidence="1">Small ribosomal subunit protein uS9</fullName>
    </recommendedName>
    <alternativeName>
        <fullName evidence="3">30S ribosomal protein S9</fullName>
    </alternativeName>
</protein>